<protein>
    <recommendedName>
        <fullName evidence="1">Elongation factor 4</fullName>
        <shortName evidence="1">EF-4</shortName>
        <ecNumber evidence="1">3.6.5.n1</ecNumber>
    </recommendedName>
    <alternativeName>
        <fullName evidence="1">Ribosomal back-translocase LepA</fullName>
    </alternativeName>
</protein>
<keyword id="KW-0997">Cell inner membrane</keyword>
<keyword id="KW-1003">Cell membrane</keyword>
<keyword id="KW-0342">GTP-binding</keyword>
<keyword id="KW-0378">Hydrolase</keyword>
<keyword id="KW-0472">Membrane</keyword>
<keyword id="KW-0547">Nucleotide-binding</keyword>
<keyword id="KW-0648">Protein biosynthesis</keyword>
<dbReference type="EC" id="3.6.5.n1" evidence="1"/>
<dbReference type="EMBL" id="CP000139">
    <property type="protein sequence ID" value="ABR41508.1"/>
    <property type="molecule type" value="Genomic_DNA"/>
</dbReference>
<dbReference type="RefSeq" id="WP_005841470.1">
    <property type="nucleotide sequence ID" value="NZ_JANSWM010000097.1"/>
</dbReference>
<dbReference type="SMR" id="A6L744"/>
<dbReference type="STRING" id="435590.BVU_3905"/>
<dbReference type="PaxDb" id="435590-BVU_3905"/>
<dbReference type="GeneID" id="5304864"/>
<dbReference type="KEGG" id="bvu:BVU_3905"/>
<dbReference type="eggNOG" id="COG0481">
    <property type="taxonomic scope" value="Bacteria"/>
</dbReference>
<dbReference type="HOGENOM" id="CLU_009995_3_3_10"/>
<dbReference type="BioCyc" id="BVUL435590:G1G59-4040-MONOMER"/>
<dbReference type="Proteomes" id="UP000002861">
    <property type="component" value="Chromosome"/>
</dbReference>
<dbReference type="GO" id="GO:0005886">
    <property type="term" value="C:plasma membrane"/>
    <property type="evidence" value="ECO:0007669"/>
    <property type="project" value="UniProtKB-SubCell"/>
</dbReference>
<dbReference type="GO" id="GO:0005525">
    <property type="term" value="F:GTP binding"/>
    <property type="evidence" value="ECO:0007669"/>
    <property type="project" value="UniProtKB-UniRule"/>
</dbReference>
<dbReference type="GO" id="GO:0003924">
    <property type="term" value="F:GTPase activity"/>
    <property type="evidence" value="ECO:0007669"/>
    <property type="project" value="UniProtKB-UniRule"/>
</dbReference>
<dbReference type="GO" id="GO:0043022">
    <property type="term" value="F:ribosome binding"/>
    <property type="evidence" value="ECO:0007669"/>
    <property type="project" value="UniProtKB-UniRule"/>
</dbReference>
<dbReference type="GO" id="GO:0003746">
    <property type="term" value="F:translation elongation factor activity"/>
    <property type="evidence" value="ECO:0007669"/>
    <property type="project" value="UniProtKB-UniRule"/>
</dbReference>
<dbReference type="GO" id="GO:0045727">
    <property type="term" value="P:positive regulation of translation"/>
    <property type="evidence" value="ECO:0007669"/>
    <property type="project" value="UniProtKB-UniRule"/>
</dbReference>
<dbReference type="CDD" id="cd03699">
    <property type="entry name" value="EF4_II"/>
    <property type="match status" value="1"/>
</dbReference>
<dbReference type="CDD" id="cd16260">
    <property type="entry name" value="EF4_III"/>
    <property type="match status" value="1"/>
</dbReference>
<dbReference type="CDD" id="cd01890">
    <property type="entry name" value="LepA"/>
    <property type="match status" value="1"/>
</dbReference>
<dbReference type="CDD" id="cd03709">
    <property type="entry name" value="lepA_C"/>
    <property type="match status" value="1"/>
</dbReference>
<dbReference type="FunFam" id="3.40.50.300:FF:000078">
    <property type="entry name" value="Elongation factor 4"/>
    <property type="match status" value="1"/>
</dbReference>
<dbReference type="FunFam" id="2.40.30.10:FF:000015">
    <property type="entry name" value="Translation factor GUF1, mitochondrial"/>
    <property type="match status" value="1"/>
</dbReference>
<dbReference type="FunFam" id="3.30.70.240:FF:000007">
    <property type="entry name" value="Translation factor GUF1, mitochondrial"/>
    <property type="match status" value="1"/>
</dbReference>
<dbReference type="FunFam" id="3.30.70.2570:FF:000001">
    <property type="entry name" value="Translation factor GUF1, mitochondrial"/>
    <property type="match status" value="1"/>
</dbReference>
<dbReference type="FunFam" id="3.30.70.870:FF:000004">
    <property type="entry name" value="Translation factor GUF1, mitochondrial"/>
    <property type="match status" value="1"/>
</dbReference>
<dbReference type="Gene3D" id="3.30.70.240">
    <property type="match status" value="1"/>
</dbReference>
<dbReference type="Gene3D" id="3.30.70.2570">
    <property type="entry name" value="Elongation factor 4, C-terminal domain"/>
    <property type="match status" value="1"/>
</dbReference>
<dbReference type="Gene3D" id="3.30.70.870">
    <property type="entry name" value="Elongation Factor G (Translational Gtpase), domain 3"/>
    <property type="match status" value="1"/>
</dbReference>
<dbReference type="Gene3D" id="3.40.50.300">
    <property type="entry name" value="P-loop containing nucleotide triphosphate hydrolases"/>
    <property type="match status" value="1"/>
</dbReference>
<dbReference type="Gene3D" id="2.40.30.10">
    <property type="entry name" value="Translation factors"/>
    <property type="match status" value="1"/>
</dbReference>
<dbReference type="HAMAP" id="MF_00071">
    <property type="entry name" value="LepA"/>
    <property type="match status" value="1"/>
</dbReference>
<dbReference type="InterPro" id="IPR006297">
    <property type="entry name" value="EF-4"/>
</dbReference>
<dbReference type="InterPro" id="IPR035647">
    <property type="entry name" value="EFG_III/V"/>
</dbReference>
<dbReference type="InterPro" id="IPR000640">
    <property type="entry name" value="EFG_V-like"/>
</dbReference>
<dbReference type="InterPro" id="IPR004161">
    <property type="entry name" value="EFTu-like_2"/>
</dbReference>
<dbReference type="InterPro" id="IPR038363">
    <property type="entry name" value="LepA_C_sf"/>
</dbReference>
<dbReference type="InterPro" id="IPR013842">
    <property type="entry name" value="LepA_CTD"/>
</dbReference>
<dbReference type="InterPro" id="IPR035654">
    <property type="entry name" value="LepA_IV"/>
</dbReference>
<dbReference type="InterPro" id="IPR027417">
    <property type="entry name" value="P-loop_NTPase"/>
</dbReference>
<dbReference type="InterPro" id="IPR005225">
    <property type="entry name" value="Small_GTP-bd"/>
</dbReference>
<dbReference type="InterPro" id="IPR000795">
    <property type="entry name" value="T_Tr_GTP-bd_dom"/>
</dbReference>
<dbReference type="NCBIfam" id="TIGR01393">
    <property type="entry name" value="lepA"/>
    <property type="match status" value="1"/>
</dbReference>
<dbReference type="NCBIfam" id="TIGR00231">
    <property type="entry name" value="small_GTP"/>
    <property type="match status" value="1"/>
</dbReference>
<dbReference type="PANTHER" id="PTHR43512:SF4">
    <property type="entry name" value="TRANSLATION FACTOR GUF1 HOMOLOG, CHLOROPLASTIC"/>
    <property type="match status" value="1"/>
</dbReference>
<dbReference type="PANTHER" id="PTHR43512">
    <property type="entry name" value="TRANSLATION FACTOR GUF1-RELATED"/>
    <property type="match status" value="1"/>
</dbReference>
<dbReference type="Pfam" id="PF00679">
    <property type="entry name" value="EFG_C"/>
    <property type="match status" value="1"/>
</dbReference>
<dbReference type="Pfam" id="PF00009">
    <property type="entry name" value="GTP_EFTU"/>
    <property type="match status" value="1"/>
</dbReference>
<dbReference type="Pfam" id="PF03144">
    <property type="entry name" value="GTP_EFTU_D2"/>
    <property type="match status" value="1"/>
</dbReference>
<dbReference type="Pfam" id="PF06421">
    <property type="entry name" value="LepA_C"/>
    <property type="match status" value="1"/>
</dbReference>
<dbReference type="PRINTS" id="PR00315">
    <property type="entry name" value="ELONGATNFCT"/>
</dbReference>
<dbReference type="SUPFAM" id="SSF54980">
    <property type="entry name" value="EF-G C-terminal domain-like"/>
    <property type="match status" value="2"/>
</dbReference>
<dbReference type="SUPFAM" id="SSF52540">
    <property type="entry name" value="P-loop containing nucleoside triphosphate hydrolases"/>
    <property type="match status" value="1"/>
</dbReference>
<dbReference type="PROSITE" id="PS51722">
    <property type="entry name" value="G_TR_2"/>
    <property type="match status" value="1"/>
</dbReference>
<proteinExistence type="inferred from homology"/>
<organism>
    <name type="scientific">Phocaeicola vulgatus (strain ATCC 8482 / DSM 1447 / JCM 5826 / CCUG 4940 / NBRC 14291 / NCTC 11154)</name>
    <name type="common">Bacteroides vulgatus</name>
    <dbReference type="NCBI Taxonomy" id="435590"/>
    <lineage>
        <taxon>Bacteria</taxon>
        <taxon>Pseudomonadati</taxon>
        <taxon>Bacteroidota</taxon>
        <taxon>Bacteroidia</taxon>
        <taxon>Bacteroidales</taxon>
        <taxon>Bacteroidaceae</taxon>
        <taxon>Phocaeicola</taxon>
    </lineage>
</organism>
<accession>A6L744</accession>
<sequence length="593" mass="66372">MKNIRNFCIIAHIDHGKSTLADRLLEFTKTIQVTEGQMLDDMDLEKERGITIKSHAIQMEYEYGGEKYVLNLIDTPGHVDFSYEVSRSIAACEGALLIVDASQGVQAQTISNLYMALEHDLEIIPVLNKCDMASAMPDEVEDEIIDLLGCKHEDIIRASGKTGMGVEEILKAVVERIPHPTGDEEAPLQALIFDSVFNSFRGIIAYFKIENGVIRKGDKVKFFNTGKEYDADEIGVLKMDMIPRAELRTGDVGYIISGIKTSREVKVGDTITHIARPCEKAIAGFEEVKPMVFAGVYPIEAEDYENLRASLEKLQLNDASLTFQPESSLALGFGFRCGFLGLLHMEIVQERLDREFDMNVITTVPNVSYMVYDKQGHANEVHNPGGMPDPTLIDHIEEPFIDATIITATDYIGPIMTLCLGKRGELVRQNYVSGNRVEIHYKMPLGEIVIDFYDKLKSISKGYASFDYHQSGFRPSKLVKLDILLNGEPVDALSTLTHVDNAYNLGKRMCEKLKELIPRQQFDIAIQAAIGAKIISRETIKAVRKDVTAKCYGGDVSRKRKLLEKQKRGKKRMKQIGNVEVPQKAFLAVLKLD</sequence>
<reference key="1">
    <citation type="journal article" date="2007" name="PLoS Biol.">
        <title>Evolution of symbiotic bacteria in the distal human intestine.</title>
        <authorList>
            <person name="Xu J."/>
            <person name="Mahowald M.A."/>
            <person name="Ley R.E."/>
            <person name="Lozupone C.A."/>
            <person name="Hamady M."/>
            <person name="Martens E.C."/>
            <person name="Henrissat B."/>
            <person name="Coutinho P.M."/>
            <person name="Minx P."/>
            <person name="Latreille P."/>
            <person name="Cordum H."/>
            <person name="Van Brunt A."/>
            <person name="Kim K."/>
            <person name="Fulton R.S."/>
            <person name="Fulton L.A."/>
            <person name="Clifton S.W."/>
            <person name="Wilson R.K."/>
            <person name="Knight R.D."/>
            <person name="Gordon J.I."/>
        </authorList>
    </citation>
    <scope>NUCLEOTIDE SEQUENCE [LARGE SCALE GENOMIC DNA]</scope>
    <source>
        <strain>ATCC 8482 / DSM 1447 / JCM 5826 / CCUG 4940 / NBRC 14291 / NCTC 11154</strain>
    </source>
</reference>
<gene>
    <name evidence="1" type="primary">lepA</name>
    <name type="ordered locus">BVU_3905</name>
</gene>
<evidence type="ECO:0000255" key="1">
    <source>
        <dbReference type="HAMAP-Rule" id="MF_00071"/>
    </source>
</evidence>
<name>LEPA_PHOV8</name>
<feature type="chain" id="PRO_1000031969" description="Elongation factor 4">
    <location>
        <begin position="1"/>
        <end position="593"/>
    </location>
</feature>
<feature type="domain" description="tr-type G">
    <location>
        <begin position="2"/>
        <end position="181"/>
    </location>
</feature>
<feature type="binding site" evidence="1">
    <location>
        <begin position="14"/>
        <end position="19"/>
    </location>
    <ligand>
        <name>GTP</name>
        <dbReference type="ChEBI" id="CHEBI:37565"/>
    </ligand>
</feature>
<feature type="binding site" evidence="1">
    <location>
        <begin position="128"/>
        <end position="131"/>
    </location>
    <ligand>
        <name>GTP</name>
        <dbReference type="ChEBI" id="CHEBI:37565"/>
    </ligand>
</feature>
<comment type="function">
    <text evidence="1">Required for accurate and efficient protein synthesis under certain stress conditions. May act as a fidelity factor of the translation reaction, by catalyzing a one-codon backward translocation of tRNAs on improperly translocated ribosomes. Back-translocation proceeds from a post-translocation (POST) complex to a pre-translocation (PRE) complex, thus giving elongation factor G a second chance to translocate the tRNAs correctly. Binds to ribosomes in a GTP-dependent manner.</text>
</comment>
<comment type="catalytic activity">
    <reaction evidence="1">
        <text>GTP + H2O = GDP + phosphate + H(+)</text>
        <dbReference type="Rhea" id="RHEA:19669"/>
        <dbReference type="ChEBI" id="CHEBI:15377"/>
        <dbReference type="ChEBI" id="CHEBI:15378"/>
        <dbReference type="ChEBI" id="CHEBI:37565"/>
        <dbReference type="ChEBI" id="CHEBI:43474"/>
        <dbReference type="ChEBI" id="CHEBI:58189"/>
        <dbReference type="EC" id="3.6.5.n1"/>
    </reaction>
</comment>
<comment type="subcellular location">
    <subcellularLocation>
        <location evidence="1">Cell inner membrane</location>
        <topology evidence="1">Peripheral membrane protein</topology>
        <orientation evidence="1">Cytoplasmic side</orientation>
    </subcellularLocation>
</comment>
<comment type="similarity">
    <text evidence="1">Belongs to the TRAFAC class translation factor GTPase superfamily. Classic translation factor GTPase family. LepA subfamily.</text>
</comment>